<reference key="1">
    <citation type="journal article" date="2004" name="Nat. Genet.">
        <title>Comparison of genome degradation in Paratyphi A and Typhi, human-restricted serovars of Salmonella enterica that cause typhoid.</title>
        <authorList>
            <person name="McClelland M."/>
            <person name="Sanderson K.E."/>
            <person name="Clifton S.W."/>
            <person name="Latreille P."/>
            <person name="Porwollik S."/>
            <person name="Sabo A."/>
            <person name="Meyer R."/>
            <person name="Bieri T."/>
            <person name="Ozersky P."/>
            <person name="McLellan M."/>
            <person name="Harkins C.R."/>
            <person name="Wang C."/>
            <person name="Nguyen C."/>
            <person name="Berghoff A."/>
            <person name="Elliott G."/>
            <person name="Kohlberg S."/>
            <person name="Strong C."/>
            <person name="Du F."/>
            <person name="Carter J."/>
            <person name="Kremizki C."/>
            <person name="Layman D."/>
            <person name="Leonard S."/>
            <person name="Sun H."/>
            <person name="Fulton L."/>
            <person name="Nash W."/>
            <person name="Miner T."/>
            <person name="Minx P."/>
            <person name="Delehaunty K."/>
            <person name="Fronick C."/>
            <person name="Magrini V."/>
            <person name="Nhan M."/>
            <person name="Warren W."/>
            <person name="Florea L."/>
            <person name="Spieth J."/>
            <person name="Wilson R.K."/>
        </authorList>
    </citation>
    <scope>NUCLEOTIDE SEQUENCE [LARGE SCALE GENOMIC DNA]</scope>
    <source>
        <strain>ATCC 9150 / SARB42</strain>
    </source>
</reference>
<feature type="chain" id="PRO_1000009805" description="dCTP deaminase">
    <location>
        <begin position="1"/>
        <end position="193"/>
    </location>
</feature>
<feature type="region of interest" description="Disordered" evidence="2">
    <location>
        <begin position="169"/>
        <end position="193"/>
    </location>
</feature>
<feature type="active site" description="Proton donor/acceptor" evidence="1">
    <location>
        <position position="138"/>
    </location>
</feature>
<feature type="binding site" evidence="1">
    <location>
        <begin position="110"/>
        <end position="115"/>
    </location>
    <ligand>
        <name>dCTP</name>
        <dbReference type="ChEBI" id="CHEBI:61481"/>
    </ligand>
</feature>
<feature type="binding site" evidence="1">
    <location>
        <position position="128"/>
    </location>
    <ligand>
        <name>dCTP</name>
        <dbReference type="ChEBI" id="CHEBI:61481"/>
    </ligand>
</feature>
<feature type="binding site" evidence="1">
    <location>
        <begin position="136"/>
        <end position="138"/>
    </location>
    <ligand>
        <name>dCTP</name>
        <dbReference type="ChEBI" id="CHEBI:61481"/>
    </ligand>
</feature>
<feature type="binding site" evidence="1">
    <location>
        <position position="171"/>
    </location>
    <ligand>
        <name>dCTP</name>
        <dbReference type="ChEBI" id="CHEBI:61481"/>
    </ligand>
</feature>
<feature type="binding site" evidence="1">
    <location>
        <position position="178"/>
    </location>
    <ligand>
        <name>dCTP</name>
        <dbReference type="ChEBI" id="CHEBI:61481"/>
    </ligand>
</feature>
<feature type="binding site" evidence="1">
    <location>
        <position position="182"/>
    </location>
    <ligand>
        <name>dCTP</name>
        <dbReference type="ChEBI" id="CHEBI:61481"/>
    </ligand>
</feature>
<evidence type="ECO:0000255" key="1">
    <source>
        <dbReference type="HAMAP-Rule" id="MF_00146"/>
    </source>
</evidence>
<evidence type="ECO:0000256" key="2">
    <source>
        <dbReference type="SAM" id="MobiDB-lite"/>
    </source>
</evidence>
<gene>
    <name evidence="1" type="primary">dcd</name>
    <name type="ordered locus">SPA0745</name>
</gene>
<organism>
    <name type="scientific">Salmonella paratyphi A (strain ATCC 9150 / SARB42)</name>
    <dbReference type="NCBI Taxonomy" id="295319"/>
    <lineage>
        <taxon>Bacteria</taxon>
        <taxon>Pseudomonadati</taxon>
        <taxon>Pseudomonadota</taxon>
        <taxon>Gammaproteobacteria</taxon>
        <taxon>Enterobacterales</taxon>
        <taxon>Enterobacteriaceae</taxon>
        <taxon>Salmonella</taxon>
    </lineage>
</organism>
<sequence>MRLCDRDIEAWLDEGRLSITPRPPVERINGATVDVRLGNKFRTFRGHTAAFIDLSGPKDEVSAALDRVMSDEIVLPDGEAFYLHPGELALAVTFESVTLPPDLVGWLDGRSSLARLGLMVHVTAHRIDPGWSGCIVLEFYNSGKLPLALRPGMLIGALSFEPLSGPAARPYNRRQDAKYRDQQGAVASRIDKD</sequence>
<accession>Q5PDX5</accession>
<keyword id="KW-0378">Hydrolase</keyword>
<keyword id="KW-0546">Nucleotide metabolism</keyword>
<keyword id="KW-0547">Nucleotide-binding</keyword>
<dbReference type="EC" id="3.5.4.13" evidence="1"/>
<dbReference type="EMBL" id="CP000026">
    <property type="protein sequence ID" value="AAV76741.1"/>
    <property type="molecule type" value="Genomic_DNA"/>
</dbReference>
<dbReference type="RefSeq" id="WP_001234783.1">
    <property type="nucleotide sequence ID" value="NC_006511.1"/>
</dbReference>
<dbReference type="SMR" id="Q5PDX5"/>
<dbReference type="KEGG" id="spt:SPA0745"/>
<dbReference type="HOGENOM" id="CLU_087476_2_0_6"/>
<dbReference type="UniPathway" id="UPA00610">
    <property type="reaction ID" value="UER00665"/>
</dbReference>
<dbReference type="Proteomes" id="UP000008185">
    <property type="component" value="Chromosome"/>
</dbReference>
<dbReference type="GO" id="GO:0008829">
    <property type="term" value="F:dCTP deaminase activity"/>
    <property type="evidence" value="ECO:0007669"/>
    <property type="project" value="UniProtKB-UniRule"/>
</dbReference>
<dbReference type="GO" id="GO:0000166">
    <property type="term" value="F:nucleotide binding"/>
    <property type="evidence" value="ECO:0007669"/>
    <property type="project" value="UniProtKB-KW"/>
</dbReference>
<dbReference type="GO" id="GO:0006226">
    <property type="term" value="P:dUMP biosynthetic process"/>
    <property type="evidence" value="ECO:0007669"/>
    <property type="project" value="UniProtKB-UniPathway"/>
</dbReference>
<dbReference type="GO" id="GO:0006229">
    <property type="term" value="P:dUTP biosynthetic process"/>
    <property type="evidence" value="ECO:0007669"/>
    <property type="project" value="UniProtKB-UniRule"/>
</dbReference>
<dbReference type="GO" id="GO:0015949">
    <property type="term" value="P:nucleobase-containing small molecule interconversion"/>
    <property type="evidence" value="ECO:0007669"/>
    <property type="project" value="TreeGrafter"/>
</dbReference>
<dbReference type="CDD" id="cd07557">
    <property type="entry name" value="trimeric_dUTPase"/>
    <property type="match status" value="1"/>
</dbReference>
<dbReference type="FunFam" id="2.70.40.10:FF:000003">
    <property type="entry name" value="dCTP deaminase"/>
    <property type="match status" value="1"/>
</dbReference>
<dbReference type="Gene3D" id="2.70.40.10">
    <property type="match status" value="1"/>
</dbReference>
<dbReference type="HAMAP" id="MF_00146">
    <property type="entry name" value="dCTP_deaminase"/>
    <property type="match status" value="1"/>
</dbReference>
<dbReference type="InterPro" id="IPR011962">
    <property type="entry name" value="dCTP_deaminase"/>
</dbReference>
<dbReference type="InterPro" id="IPR036157">
    <property type="entry name" value="dUTPase-like_sf"/>
</dbReference>
<dbReference type="InterPro" id="IPR033704">
    <property type="entry name" value="dUTPase_trimeric"/>
</dbReference>
<dbReference type="NCBIfam" id="TIGR02274">
    <property type="entry name" value="dCTP_deam"/>
    <property type="match status" value="1"/>
</dbReference>
<dbReference type="PANTHER" id="PTHR42680">
    <property type="entry name" value="DCTP DEAMINASE"/>
    <property type="match status" value="1"/>
</dbReference>
<dbReference type="PANTHER" id="PTHR42680:SF3">
    <property type="entry name" value="DCTP DEAMINASE"/>
    <property type="match status" value="1"/>
</dbReference>
<dbReference type="Pfam" id="PF22769">
    <property type="entry name" value="DCD"/>
    <property type="match status" value="1"/>
</dbReference>
<dbReference type="SUPFAM" id="SSF51283">
    <property type="entry name" value="dUTPase-like"/>
    <property type="match status" value="1"/>
</dbReference>
<comment type="function">
    <text evidence="1">Catalyzes the deamination of dCTP to dUTP.</text>
</comment>
<comment type="catalytic activity">
    <reaction evidence="1">
        <text>dCTP + H2O + H(+) = dUTP + NH4(+)</text>
        <dbReference type="Rhea" id="RHEA:22680"/>
        <dbReference type="ChEBI" id="CHEBI:15377"/>
        <dbReference type="ChEBI" id="CHEBI:15378"/>
        <dbReference type="ChEBI" id="CHEBI:28938"/>
        <dbReference type="ChEBI" id="CHEBI:61481"/>
        <dbReference type="ChEBI" id="CHEBI:61555"/>
        <dbReference type="EC" id="3.5.4.13"/>
    </reaction>
</comment>
<comment type="pathway">
    <text evidence="1">Pyrimidine metabolism; dUMP biosynthesis; dUMP from dCTP (dUTP route): step 1/2.</text>
</comment>
<comment type="subunit">
    <text evidence="1">Homotrimer.</text>
</comment>
<comment type="similarity">
    <text evidence="1">Belongs to the dCTP deaminase family.</text>
</comment>
<proteinExistence type="inferred from homology"/>
<name>DCD_SALPA</name>
<protein>
    <recommendedName>
        <fullName evidence="1">dCTP deaminase</fullName>
        <ecNumber evidence="1">3.5.4.13</ecNumber>
    </recommendedName>
    <alternativeName>
        <fullName evidence="1">Deoxycytidine triphosphate deaminase</fullName>
    </alternativeName>
</protein>